<evidence type="ECO:0000255" key="1">
    <source>
        <dbReference type="HAMAP-Rule" id="MF_01971"/>
    </source>
</evidence>
<organism>
    <name type="scientific">Salinispora tropica (strain ATCC BAA-916 / DSM 44818 / JCM 13857 / NBRC 105044 / CNB-440)</name>
    <dbReference type="NCBI Taxonomy" id="369723"/>
    <lineage>
        <taxon>Bacteria</taxon>
        <taxon>Bacillati</taxon>
        <taxon>Actinomycetota</taxon>
        <taxon>Actinomycetes</taxon>
        <taxon>Micromonosporales</taxon>
        <taxon>Micromonosporaceae</taxon>
        <taxon>Salinispora</taxon>
    </lineage>
</organism>
<accession>A4XD40</accession>
<protein>
    <recommendedName>
        <fullName evidence="1">Kynurenine 3-monooxygenase</fullName>
        <ecNumber evidence="1">1.14.13.9</ecNumber>
    </recommendedName>
    <alternativeName>
        <fullName evidence="1">Kynurenine 3-hydroxylase</fullName>
    </alternativeName>
</protein>
<comment type="function">
    <text evidence="1">Catalyzes the hydroxylation of L-kynurenine (L-Kyn) to form 3-hydroxy-L-kynurenine (L-3OHKyn). Required for synthesis of quinolinic acid.</text>
</comment>
<comment type="catalytic activity">
    <reaction evidence="1">
        <text>L-kynurenine + NADPH + O2 + H(+) = 3-hydroxy-L-kynurenine + NADP(+) + H2O</text>
        <dbReference type="Rhea" id="RHEA:20545"/>
        <dbReference type="ChEBI" id="CHEBI:15377"/>
        <dbReference type="ChEBI" id="CHEBI:15378"/>
        <dbReference type="ChEBI" id="CHEBI:15379"/>
        <dbReference type="ChEBI" id="CHEBI:57783"/>
        <dbReference type="ChEBI" id="CHEBI:57959"/>
        <dbReference type="ChEBI" id="CHEBI:58125"/>
        <dbReference type="ChEBI" id="CHEBI:58349"/>
        <dbReference type="EC" id="1.14.13.9"/>
    </reaction>
</comment>
<comment type="cofactor">
    <cofactor evidence="1">
        <name>FAD</name>
        <dbReference type="ChEBI" id="CHEBI:57692"/>
    </cofactor>
</comment>
<comment type="pathway">
    <text evidence="1">Cofactor biosynthesis; NAD(+) biosynthesis; quinolinate from L-kynurenine: step 1/3.</text>
</comment>
<comment type="similarity">
    <text evidence="1">Belongs to the aromatic-ring hydroxylase family. KMO subfamily.</text>
</comment>
<keyword id="KW-0274">FAD</keyword>
<keyword id="KW-0285">Flavoprotein</keyword>
<keyword id="KW-0503">Monooxygenase</keyword>
<keyword id="KW-0521">NADP</keyword>
<keyword id="KW-0560">Oxidoreductase</keyword>
<keyword id="KW-0662">Pyridine nucleotide biosynthesis</keyword>
<keyword id="KW-1185">Reference proteome</keyword>
<reference key="1">
    <citation type="journal article" date="2007" name="Proc. Natl. Acad. Sci. U.S.A.">
        <title>Genome sequencing reveals complex secondary metabolome in the marine actinomycete Salinispora tropica.</title>
        <authorList>
            <person name="Udwary D.W."/>
            <person name="Zeigler L."/>
            <person name="Asolkar R.N."/>
            <person name="Singan V."/>
            <person name="Lapidus A."/>
            <person name="Fenical W."/>
            <person name="Jensen P.R."/>
            <person name="Moore B.S."/>
        </authorList>
    </citation>
    <scope>NUCLEOTIDE SEQUENCE [LARGE SCALE GENOMIC DNA]</scope>
    <source>
        <strain>ATCC BAA-916 / DSM 44818 / JCM 13857 / NBRC 105044 / CNB-440</strain>
    </source>
</reference>
<gene>
    <name evidence="1" type="primary">kmo</name>
    <name type="ordered locus">Strop_4419</name>
</gene>
<name>KMO_SALTO</name>
<feature type="chain" id="PRO_0000361944" description="Kynurenine 3-monooxygenase">
    <location>
        <begin position="1"/>
        <end position="453"/>
    </location>
</feature>
<proteinExistence type="inferred from homology"/>
<sequence>MNRRRERVVVVGAGLAGSLVALYLARQGHEVDVFERRPDPRSALGRPEGRSINLGLSARGMRALDGVGLLADVLKHSVPMRDRVVHSPDGGIRTQPYGVREHEILHSVLREELISLVVTAAEAEPGVRFHFDSLLASLDRETGTVDVAPTAGGETRTVTADLIVGADGAFSTIRQQMQHGLRANYAQEFLPWGYKELTIPVDADGQPRVRLEALHVWPGHEAMMIAHPNRDGSLTCTLFMAHEGPVSFAALDTPTAVRDFFRQRFPDAEELMPDLVREVTEHPVGHLVTVRSDPWRYADRVVLIGDAAHAVYPFYGQGMNSAFEDCVVLDECLTAHPDRATALAAYEAARKPHTDVLADLSTANFEDLRDRVHRLGYSASAAADRLLARLLPQHWVPLYGMVAHTTIPYADALARAKRQDRILRQAGAGLALVTVLAATAALRAGRRRRANRR</sequence>
<dbReference type="EC" id="1.14.13.9" evidence="1"/>
<dbReference type="EMBL" id="CP000667">
    <property type="protein sequence ID" value="ABP56847.1"/>
    <property type="molecule type" value="Genomic_DNA"/>
</dbReference>
<dbReference type="RefSeq" id="WP_012015611.1">
    <property type="nucleotide sequence ID" value="NC_009380.1"/>
</dbReference>
<dbReference type="SMR" id="A4XD40"/>
<dbReference type="STRING" id="369723.Strop_4419"/>
<dbReference type="KEGG" id="stp:Strop_4419"/>
<dbReference type="PATRIC" id="fig|369723.5.peg.4570"/>
<dbReference type="eggNOG" id="COG0654">
    <property type="taxonomic scope" value="Bacteria"/>
</dbReference>
<dbReference type="HOGENOM" id="CLU_023210_0_1_11"/>
<dbReference type="UniPathway" id="UPA00253">
    <property type="reaction ID" value="UER00328"/>
</dbReference>
<dbReference type="Proteomes" id="UP000000235">
    <property type="component" value="Chromosome"/>
</dbReference>
<dbReference type="GO" id="GO:0071949">
    <property type="term" value="F:FAD binding"/>
    <property type="evidence" value="ECO:0007669"/>
    <property type="project" value="InterPro"/>
</dbReference>
<dbReference type="GO" id="GO:0004502">
    <property type="term" value="F:kynurenine 3-monooxygenase activity"/>
    <property type="evidence" value="ECO:0007669"/>
    <property type="project" value="UniProtKB-UniRule"/>
</dbReference>
<dbReference type="GO" id="GO:0043420">
    <property type="term" value="P:anthranilate metabolic process"/>
    <property type="evidence" value="ECO:0007669"/>
    <property type="project" value="UniProtKB-UniRule"/>
</dbReference>
<dbReference type="GO" id="GO:0070189">
    <property type="term" value="P:kynurenine metabolic process"/>
    <property type="evidence" value="ECO:0007669"/>
    <property type="project" value="TreeGrafter"/>
</dbReference>
<dbReference type="GO" id="GO:0006569">
    <property type="term" value="P:L-tryptophan catabolic process"/>
    <property type="evidence" value="ECO:0007669"/>
    <property type="project" value="UniProtKB-UniRule"/>
</dbReference>
<dbReference type="GO" id="GO:0009435">
    <property type="term" value="P:NAD biosynthetic process"/>
    <property type="evidence" value="ECO:0007669"/>
    <property type="project" value="UniProtKB-UniPathway"/>
</dbReference>
<dbReference type="GO" id="GO:0019805">
    <property type="term" value="P:quinolinate biosynthetic process"/>
    <property type="evidence" value="ECO:0007669"/>
    <property type="project" value="UniProtKB-UniRule"/>
</dbReference>
<dbReference type="FunFam" id="3.50.50.60:FF:000185">
    <property type="entry name" value="Kynurenine 3-monooxygenase"/>
    <property type="match status" value="1"/>
</dbReference>
<dbReference type="Gene3D" id="3.50.50.60">
    <property type="entry name" value="FAD/NAD(P)-binding domain"/>
    <property type="match status" value="1"/>
</dbReference>
<dbReference type="HAMAP" id="MF_01971">
    <property type="entry name" value="Kynurenine_monooxygenase"/>
    <property type="match status" value="1"/>
</dbReference>
<dbReference type="InterPro" id="IPR002938">
    <property type="entry name" value="FAD-bd"/>
</dbReference>
<dbReference type="InterPro" id="IPR036188">
    <property type="entry name" value="FAD/NAD-bd_sf"/>
</dbReference>
<dbReference type="InterPro" id="IPR027545">
    <property type="entry name" value="Kynurenine_monooxygenase"/>
</dbReference>
<dbReference type="PANTHER" id="PTHR46028">
    <property type="entry name" value="KYNURENINE 3-MONOOXYGENASE"/>
    <property type="match status" value="1"/>
</dbReference>
<dbReference type="PANTHER" id="PTHR46028:SF2">
    <property type="entry name" value="KYNURENINE 3-MONOOXYGENASE"/>
    <property type="match status" value="1"/>
</dbReference>
<dbReference type="Pfam" id="PF01494">
    <property type="entry name" value="FAD_binding_3"/>
    <property type="match status" value="1"/>
</dbReference>
<dbReference type="PRINTS" id="PR00420">
    <property type="entry name" value="RNGMNOXGNASE"/>
</dbReference>
<dbReference type="SUPFAM" id="SSF51905">
    <property type="entry name" value="FAD/NAD(P)-binding domain"/>
    <property type="match status" value="1"/>
</dbReference>